<evidence type="ECO:0000255" key="1">
    <source>
        <dbReference type="HAMAP-Rule" id="MF_00652"/>
    </source>
</evidence>
<reference key="1">
    <citation type="journal article" date="2008" name="Proc. Natl. Acad. Sci. U.S.A.">
        <title>The genome of Cyanothece 51142, a unicellular diazotrophic cyanobacterium important in the marine nitrogen cycle.</title>
        <authorList>
            <person name="Welsh E.A."/>
            <person name="Liberton M."/>
            <person name="Stoeckel J."/>
            <person name="Loh T."/>
            <person name="Elvitigala T."/>
            <person name="Wang C."/>
            <person name="Wollam A."/>
            <person name="Fulton R.S."/>
            <person name="Clifton S.W."/>
            <person name="Jacobs J.M."/>
            <person name="Aurora R."/>
            <person name="Ghosh B.K."/>
            <person name="Sherman L.A."/>
            <person name="Smith R.D."/>
            <person name="Wilson R.K."/>
            <person name="Pakrasi H.B."/>
        </authorList>
    </citation>
    <scope>NUCLEOTIDE SEQUENCE [LARGE SCALE GENOMIC DNA]</scope>
    <source>
        <strain>ATCC 51142 / BH68</strain>
    </source>
</reference>
<comment type="similarity">
    <text evidence="1">Belongs to the UPF0246 family.</text>
</comment>
<dbReference type="EMBL" id="CP000806">
    <property type="protein sequence ID" value="ACB52643.1"/>
    <property type="molecule type" value="Genomic_DNA"/>
</dbReference>
<dbReference type="RefSeq" id="WP_009547918.1">
    <property type="nucleotide sequence ID" value="NC_010546.1"/>
</dbReference>
<dbReference type="SMR" id="B1WY59"/>
<dbReference type="KEGG" id="cyt:cce_3295"/>
<dbReference type="eggNOG" id="COG3022">
    <property type="taxonomic scope" value="Bacteria"/>
</dbReference>
<dbReference type="HOGENOM" id="CLU_061989_0_0_3"/>
<dbReference type="OrthoDB" id="9777133at2"/>
<dbReference type="Proteomes" id="UP000001203">
    <property type="component" value="Chromosome circular"/>
</dbReference>
<dbReference type="GO" id="GO:0005829">
    <property type="term" value="C:cytosol"/>
    <property type="evidence" value="ECO:0007669"/>
    <property type="project" value="TreeGrafter"/>
</dbReference>
<dbReference type="GO" id="GO:0033194">
    <property type="term" value="P:response to hydroperoxide"/>
    <property type="evidence" value="ECO:0007669"/>
    <property type="project" value="TreeGrafter"/>
</dbReference>
<dbReference type="HAMAP" id="MF_00652">
    <property type="entry name" value="UPF0246"/>
    <property type="match status" value="1"/>
</dbReference>
<dbReference type="InterPro" id="IPR005583">
    <property type="entry name" value="YaaA"/>
</dbReference>
<dbReference type="NCBIfam" id="NF002542">
    <property type="entry name" value="PRK02101.1-3"/>
    <property type="match status" value="1"/>
</dbReference>
<dbReference type="PANTHER" id="PTHR30283:SF4">
    <property type="entry name" value="PEROXIDE STRESS RESISTANCE PROTEIN YAAA"/>
    <property type="match status" value="1"/>
</dbReference>
<dbReference type="PANTHER" id="PTHR30283">
    <property type="entry name" value="PEROXIDE STRESS RESPONSE PROTEIN YAAA"/>
    <property type="match status" value="1"/>
</dbReference>
<dbReference type="Pfam" id="PF03883">
    <property type="entry name" value="H2O2_YaaD"/>
    <property type="match status" value="1"/>
</dbReference>
<accession>B1WY59</accession>
<gene>
    <name type="ordered locus">cce_3295</name>
</gene>
<name>Y3295_CROS5</name>
<sequence>MLLILSSAKTLVFDDAFTVPKITEPIFKKEGEFLVDLLQKFSEKDLEKLLKVSESLANLNYQRFQSFNTSEKQASILAYRGDVFKQLQLNKFNKNDYLFAQNHVRIISGLYGILRPLDQISPYRLEMNTCLKTENNDNLYQFWEEKVTEKLNNELEQHNNQVLLNLASDEYSRMIKNEKFNYPIFKVSFKEMRNGKLKTIGIIAKKSRGLMTNWIIENKIDDSSKLKDYNGLGYHYDDSLSNEKEMVFIK</sequence>
<keyword id="KW-1185">Reference proteome</keyword>
<protein>
    <recommendedName>
        <fullName evidence="1">UPF0246 protein cce_3295</fullName>
    </recommendedName>
</protein>
<proteinExistence type="inferred from homology"/>
<organism>
    <name type="scientific">Crocosphaera subtropica (strain ATCC 51142 / BH68)</name>
    <name type="common">Cyanothece sp. (strain ATCC 51142)</name>
    <dbReference type="NCBI Taxonomy" id="43989"/>
    <lineage>
        <taxon>Bacteria</taxon>
        <taxon>Bacillati</taxon>
        <taxon>Cyanobacteriota</taxon>
        <taxon>Cyanophyceae</taxon>
        <taxon>Oscillatoriophycideae</taxon>
        <taxon>Chroococcales</taxon>
        <taxon>Aphanothecaceae</taxon>
        <taxon>Crocosphaera</taxon>
        <taxon>Crocosphaera subtropica</taxon>
    </lineage>
</organism>
<feature type="chain" id="PRO_1000200417" description="UPF0246 protein cce_3295">
    <location>
        <begin position="1"/>
        <end position="250"/>
    </location>
</feature>